<gene>
    <name type="primary">hemC</name>
    <name type="ordered locus">NMA0718</name>
</gene>
<sequence>MNPKKLVIASRESLLAMWQAKHIQGRLKALYPDCEVEILGMTTRGDQILDKTLSKVGGKGLFVKELEQALYDGRADLAVHSIKDVPMDLPEGFALAAIGERANPFDAFVSNQYARLEEMPEGAVVGTSSLRREAQLRARYPHLLIKPLRGNVQTRLSKLDNGEYDAIILAAAGLQRLKLDGRIRMILSESDSLPAAGQGALGIEIAAHREDLYEVLKPLNHGVTNACVTAERALARALGGSCQVPLAAYCTEENGLLTLRGLVGHPDGSVVLRADAQAPAEYADALGRAVAKKLADDGARELIGAVLNTEN</sequence>
<proteinExistence type="inferred from homology"/>
<comment type="function">
    <text evidence="1">Tetrapolymerization of the monopyrrole PBG into the hydroxymethylbilane pre-uroporphyrinogen in several discrete steps.</text>
</comment>
<comment type="catalytic activity">
    <reaction>
        <text>4 porphobilinogen + H2O = hydroxymethylbilane + 4 NH4(+)</text>
        <dbReference type="Rhea" id="RHEA:13185"/>
        <dbReference type="ChEBI" id="CHEBI:15377"/>
        <dbReference type="ChEBI" id="CHEBI:28938"/>
        <dbReference type="ChEBI" id="CHEBI:57845"/>
        <dbReference type="ChEBI" id="CHEBI:58126"/>
        <dbReference type="EC" id="2.5.1.61"/>
    </reaction>
</comment>
<comment type="cofactor">
    <cofactor evidence="1">
        <name>dipyrromethane</name>
        <dbReference type="ChEBI" id="CHEBI:60342"/>
    </cofactor>
    <text evidence="1">Binds 1 dipyrromethane group covalently.</text>
</comment>
<comment type="pathway">
    <text>Porphyrin-containing compound metabolism; protoporphyrin-IX biosynthesis; coproporphyrinogen-III from 5-aminolevulinate: step 2/4.</text>
</comment>
<comment type="subunit">
    <text evidence="1">Monomer.</text>
</comment>
<comment type="miscellaneous">
    <text evidence="1">The porphobilinogen subunits are added to the dipyrromethane group.</text>
</comment>
<comment type="similarity">
    <text evidence="2">Belongs to the HMBS family.</text>
</comment>
<dbReference type="EC" id="2.5.1.61"/>
<dbReference type="EMBL" id="AL157959">
    <property type="protein sequence ID" value="CAM07972.1"/>
    <property type="molecule type" value="Genomic_DNA"/>
</dbReference>
<dbReference type="PIR" id="A81915">
    <property type="entry name" value="A81915"/>
</dbReference>
<dbReference type="RefSeq" id="WP_002246814.1">
    <property type="nucleotide sequence ID" value="NC_003116.1"/>
</dbReference>
<dbReference type="SMR" id="Q9JVS4"/>
<dbReference type="EnsemblBacteria" id="CAM07972">
    <property type="protein sequence ID" value="CAM07972"/>
    <property type="gene ID" value="NMA0718"/>
</dbReference>
<dbReference type="GeneID" id="93386650"/>
<dbReference type="KEGG" id="nma:NMA0718"/>
<dbReference type="HOGENOM" id="CLU_019704_0_2_4"/>
<dbReference type="UniPathway" id="UPA00251">
    <property type="reaction ID" value="UER00319"/>
</dbReference>
<dbReference type="Proteomes" id="UP000000626">
    <property type="component" value="Chromosome"/>
</dbReference>
<dbReference type="GO" id="GO:0005737">
    <property type="term" value="C:cytoplasm"/>
    <property type="evidence" value="ECO:0007669"/>
    <property type="project" value="TreeGrafter"/>
</dbReference>
<dbReference type="GO" id="GO:0004418">
    <property type="term" value="F:hydroxymethylbilane synthase activity"/>
    <property type="evidence" value="ECO:0007669"/>
    <property type="project" value="UniProtKB-UniRule"/>
</dbReference>
<dbReference type="GO" id="GO:0006782">
    <property type="term" value="P:protoporphyrinogen IX biosynthetic process"/>
    <property type="evidence" value="ECO:0007669"/>
    <property type="project" value="UniProtKB-UniRule"/>
</dbReference>
<dbReference type="CDD" id="cd13646">
    <property type="entry name" value="PBP2_EcHMBS_like"/>
    <property type="match status" value="1"/>
</dbReference>
<dbReference type="FunFam" id="3.30.160.40:FF:000001">
    <property type="entry name" value="Porphobilinogen deaminase"/>
    <property type="match status" value="1"/>
</dbReference>
<dbReference type="FunFam" id="3.40.190.10:FF:000004">
    <property type="entry name" value="Porphobilinogen deaminase"/>
    <property type="match status" value="1"/>
</dbReference>
<dbReference type="FunFam" id="3.40.190.10:FF:000005">
    <property type="entry name" value="Porphobilinogen deaminase"/>
    <property type="match status" value="1"/>
</dbReference>
<dbReference type="Gene3D" id="3.40.190.10">
    <property type="entry name" value="Periplasmic binding protein-like II"/>
    <property type="match status" value="2"/>
</dbReference>
<dbReference type="Gene3D" id="3.30.160.40">
    <property type="entry name" value="Porphobilinogen deaminase, C-terminal domain"/>
    <property type="match status" value="1"/>
</dbReference>
<dbReference type="HAMAP" id="MF_00260">
    <property type="entry name" value="Porphobil_deam"/>
    <property type="match status" value="1"/>
</dbReference>
<dbReference type="InterPro" id="IPR000860">
    <property type="entry name" value="HemC"/>
</dbReference>
<dbReference type="InterPro" id="IPR022419">
    <property type="entry name" value="Porphobilin_deaminase_cofac_BS"/>
</dbReference>
<dbReference type="InterPro" id="IPR022417">
    <property type="entry name" value="Porphobilin_deaminase_N"/>
</dbReference>
<dbReference type="InterPro" id="IPR022418">
    <property type="entry name" value="Porphobilinogen_deaminase_C"/>
</dbReference>
<dbReference type="InterPro" id="IPR036803">
    <property type="entry name" value="Porphobilinogen_deaminase_C_sf"/>
</dbReference>
<dbReference type="NCBIfam" id="TIGR00212">
    <property type="entry name" value="hemC"/>
    <property type="match status" value="1"/>
</dbReference>
<dbReference type="PANTHER" id="PTHR11557">
    <property type="entry name" value="PORPHOBILINOGEN DEAMINASE"/>
    <property type="match status" value="1"/>
</dbReference>
<dbReference type="PANTHER" id="PTHR11557:SF0">
    <property type="entry name" value="PORPHOBILINOGEN DEAMINASE"/>
    <property type="match status" value="1"/>
</dbReference>
<dbReference type="Pfam" id="PF01379">
    <property type="entry name" value="Porphobil_deam"/>
    <property type="match status" value="1"/>
</dbReference>
<dbReference type="Pfam" id="PF03900">
    <property type="entry name" value="Porphobil_deamC"/>
    <property type="match status" value="1"/>
</dbReference>
<dbReference type="PIRSF" id="PIRSF001438">
    <property type="entry name" value="4pyrrol_synth_OHMeBilane_synth"/>
    <property type="match status" value="1"/>
</dbReference>
<dbReference type="PRINTS" id="PR00151">
    <property type="entry name" value="PORPHBDMNASE"/>
</dbReference>
<dbReference type="SUPFAM" id="SSF53850">
    <property type="entry name" value="Periplasmic binding protein-like II"/>
    <property type="match status" value="1"/>
</dbReference>
<dbReference type="SUPFAM" id="SSF54782">
    <property type="entry name" value="Porphobilinogen deaminase (hydroxymethylbilane synthase), C-terminal domain"/>
    <property type="match status" value="1"/>
</dbReference>
<dbReference type="PROSITE" id="PS00533">
    <property type="entry name" value="PORPHOBILINOGEN_DEAM"/>
    <property type="match status" value="1"/>
</dbReference>
<keyword id="KW-0627">Porphyrin biosynthesis</keyword>
<keyword id="KW-0808">Transferase</keyword>
<organism>
    <name type="scientific">Neisseria meningitidis serogroup A / serotype 4A (strain DSM 15465 / Z2491)</name>
    <dbReference type="NCBI Taxonomy" id="122587"/>
    <lineage>
        <taxon>Bacteria</taxon>
        <taxon>Pseudomonadati</taxon>
        <taxon>Pseudomonadota</taxon>
        <taxon>Betaproteobacteria</taxon>
        <taxon>Neisseriales</taxon>
        <taxon>Neisseriaceae</taxon>
        <taxon>Neisseria</taxon>
    </lineage>
</organism>
<accession>Q9JVS4</accession>
<accession>A1IQE1</accession>
<evidence type="ECO:0000250" key="1"/>
<evidence type="ECO:0000305" key="2"/>
<reference key="1">
    <citation type="journal article" date="2000" name="Nature">
        <title>Complete DNA sequence of a serogroup A strain of Neisseria meningitidis Z2491.</title>
        <authorList>
            <person name="Parkhill J."/>
            <person name="Achtman M."/>
            <person name="James K.D."/>
            <person name="Bentley S.D."/>
            <person name="Churcher C.M."/>
            <person name="Klee S.R."/>
            <person name="Morelli G."/>
            <person name="Basham D."/>
            <person name="Brown D."/>
            <person name="Chillingworth T."/>
            <person name="Davies R.M."/>
            <person name="Davis P."/>
            <person name="Devlin K."/>
            <person name="Feltwell T."/>
            <person name="Hamlin N."/>
            <person name="Holroyd S."/>
            <person name="Jagels K."/>
            <person name="Leather S."/>
            <person name="Moule S."/>
            <person name="Mungall K.L."/>
            <person name="Quail M.A."/>
            <person name="Rajandream M.A."/>
            <person name="Rutherford K.M."/>
            <person name="Simmonds M."/>
            <person name="Skelton J."/>
            <person name="Whitehead S."/>
            <person name="Spratt B.G."/>
            <person name="Barrell B.G."/>
        </authorList>
    </citation>
    <scope>NUCLEOTIDE SEQUENCE [LARGE SCALE GENOMIC DNA]</scope>
    <source>
        <strain>DSM 15465 / Z2491</strain>
    </source>
</reference>
<feature type="chain" id="PRO_0000142961" description="Porphobilinogen deaminase">
    <location>
        <begin position="1"/>
        <end position="311"/>
    </location>
</feature>
<feature type="modified residue" description="S-(dipyrrolylmethanemethyl)cysteine" evidence="1">
    <location>
        <position position="242"/>
    </location>
</feature>
<protein>
    <recommendedName>
        <fullName>Porphobilinogen deaminase</fullName>
        <shortName>PBG</shortName>
        <ecNumber>2.5.1.61</ecNumber>
    </recommendedName>
    <alternativeName>
        <fullName>Hydroxymethylbilane synthase</fullName>
        <shortName>HMBS</shortName>
    </alternativeName>
    <alternativeName>
        <fullName>Pre-uroporphyrinogen synthase</fullName>
    </alternativeName>
</protein>
<name>HEM3_NEIMA</name>